<gene>
    <name evidence="5" type="primary">AA11A</name>
    <name type="ORF">AFUB_044010</name>
</gene>
<evidence type="ECO:0000250" key="1">
    <source>
        <dbReference type="UniProtKB" id="Q2UA85"/>
    </source>
</evidence>
<evidence type="ECO:0000255" key="2"/>
<evidence type="ECO:0000255" key="3">
    <source>
        <dbReference type="PROSITE-ProRule" id="PRU00498"/>
    </source>
</evidence>
<evidence type="ECO:0000269" key="4">
    <source>
    </source>
</evidence>
<evidence type="ECO:0000303" key="5">
    <source>
    </source>
</evidence>
<evidence type="ECO:0000305" key="6"/>
<evidence type="ECO:0007744" key="7">
    <source>
        <dbReference type="PDB" id="7P3U"/>
    </source>
</evidence>
<evidence type="ECO:0007829" key="8">
    <source>
        <dbReference type="PDB" id="7P3U"/>
    </source>
</evidence>
<sequence length="219" mass="23539">MMLSKVVMGLLTASLAAAHMEMSWPYPLRSRFDPQVPEEDIDYSMTSPLNSDGSNFPCKGYQTNTPWRATAQYTAGQTYNMTITGSATHGGGSCQLSLSYDNGKTFKVIQSMEGGCPLVSKYNFKIPGDVANGQALFAWTWYNLIGNRELYMNCADVVISGGTGTPSSFESAYPDLFVANVGNGCSTVEGRETVFANPGDQVIYGGTVTPSSPAFPICH</sequence>
<name>LP11A_ASPFC</name>
<dbReference type="EC" id="1.14.99.-" evidence="4"/>
<dbReference type="EMBL" id="DS499596">
    <property type="protein sequence ID" value="EDP53229.1"/>
    <property type="molecule type" value="Genomic_DNA"/>
</dbReference>
<dbReference type="PDB" id="7P3U">
    <property type="method" value="X-ray"/>
    <property type="resolution" value="1.50 A"/>
    <property type="chains" value="A=19-219"/>
</dbReference>
<dbReference type="PDBsum" id="7P3U"/>
<dbReference type="SMR" id="B0XZD3"/>
<dbReference type="EnsemblFungi" id="EDP53229">
    <property type="protein sequence ID" value="EDP53229"/>
    <property type="gene ID" value="AFUB_044010"/>
</dbReference>
<dbReference type="VEuPathDB" id="FungiDB:AFUB_044010"/>
<dbReference type="HOGENOM" id="CLU_032571_2_2_1"/>
<dbReference type="OrthoDB" id="31007at5052"/>
<dbReference type="PhylomeDB" id="B0XZD3"/>
<dbReference type="Proteomes" id="UP000001699">
    <property type="component" value="Unassembled WGS sequence"/>
</dbReference>
<dbReference type="GO" id="GO:0046872">
    <property type="term" value="F:metal ion binding"/>
    <property type="evidence" value="ECO:0007669"/>
    <property type="project" value="UniProtKB-KW"/>
</dbReference>
<dbReference type="GO" id="GO:0004497">
    <property type="term" value="F:monooxygenase activity"/>
    <property type="evidence" value="ECO:0007669"/>
    <property type="project" value="UniProtKB-KW"/>
</dbReference>
<dbReference type="GO" id="GO:0006032">
    <property type="term" value="P:chitin catabolic process"/>
    <property type="evidence" value="ECO:0007669"/>
    <property type="project" value="UniProtKB-KW"/>
</dbReference>
<dbReference type="GO" id="GO:0000272">
    <property type="term" value="P:polysaccharide catabolic process"/>
    <property type="evidence" value="ECO:0007669"/>
    <property type="project" value="UniProtKB-KW"/>
</dbReference>
<dbReference type="Gene3D" id="2.70.50.70">
    <property type="match status" value="1"/>
</dbReference>
<dbReference type="InterPro" id="IPR004302">
    <property type="entry name" value="Cellulose/chitin-bd_N"/>
</dbReference>
<dbReference type="PANTHER" id="PTHR36182">
    <property type="entry name" value="PROTEIN, PUTATIVE (AFU_ORTHOLOGUE AFUA_6G10930)-RELATED"/>
    <property type="match status" value="1"/>
</dbReference>
<dbReference type="PANTHER" id="PTHR36182:SF1">
    <property type="entry name" value="PROTEIN, PUTATIVE (AFU_ORTHOLOGUE AFUA_6G10930)-RELATED"/>
    <property type="match status" value="1"/>
</dbReference>
<dbReference type="Pfam" id="PF03067">
    <property type="entry name" value="LPMO_10"/>
    <property type="match status" value="1"/>
</dbReference>
<keyword id="KW-0002">3D-structure</keyword>
<keyword id="KW-0119">Carbohydrate metabolism</keyword>
<keyword id="KW-0146">Chitin degradation</keyword>
<keyword id="KW-0186">Copper</keyword>
<keyword id="KW-1015">Disulfide bond</keyword>
<keyword id="KW-0325">Glycoprotein</keyword>
<keyword id="KW-0479">Metal-binding</keyword>
<keyword id="KW-0503">Monooxygenase</keyword>
<keyword id="KW-0560">Oxidoreductase</keyword>
<keyword id="KW-0624">Polysaccharide degradation</keyword>
<keyword id="KW-0732">Signal</keyword>
<accession>B0XZD3</accession>
<proteinExistence type="evidence at protein level"/>
<protein>
    <recommendedName>
        <fullName evidence="5">AA11 family lytic polysaccharide monooxygenase A</fullName>
        <shortName evidence="5">AA11A</shortName>
        <shortName evidence="5">LPMO11A</shortName>
        <ecNumber evidence="4">1.14.99.-</ecNumber>
    </recommendedName>
</protein>
<feature type="signal peptide" evidence="2">
    <location>
        <begin position="1"/>
        <end position="18"/>
    </location>
</feature>
<feature type="chain" id="PRO_5002760575" description="AA11 family lytic polysaccharide monooxygenase A">
    <location>
        <begin position="19"/>
        <end position="219"/>
    </location>
</feature>
<feature type="binding site" evidence="1">
    <location>
        <position position="19"/>
    </location>
    <ligand>
        <name>Cu(+)</name>
        <dbReference type="ChEBI" id="CHEBI:49552"/>
        <note>catalytic</note>
    </ligand>
</feature>
<feature type="binding site" evidence="1">
    <location>
        <position position="89"/>
    </location>
    <ligand>
        <name>Cu(+)</name>
        <dbReference type="ChEBI" id="CHEBI:49552"/>
        <note>catalytic</note>
    </ligand>
</feature>
<feature type="glycosylation site" description="N-linked (GlcNAc...) asparagine" evidence="3 4">
    <location>
        <position position="80"/>
    </location>
</feature>
<feature type="disulfide bond" evidence="7">
    <location>
        <begin position="58"/>
        <end position="154"/>
    </location>
</feature>
<feature type="disulfide bond" evidence="7">
    <location>
        <begin position="94"/>
        <end position="116"/>
    </location>
</feature>
<feature type="disulfide bond" evidence="7">
    <location>
        <begin position="185"/>
        <end position="218"/>
    </location>
</feature>
<feature type="strand" evidence="8">
    <location>
        <begin position="20"/>
        <end position="25"/>
    </location>
</feature>
<feature type="helix" evidence="8">
    <location>
        <begin position="38"/>
        <end position="40"/>
    </location>
</feature>
<feature type="turn" evidence="8">
    <location>
        <begin position="43"/>
        <end position="46"/>
    </location>
</feature>
<feature type="turn" evidence="8">
    <location>
        <begin position="54"/>
        <end position="57"/>
    </location>
</feature>
<feature type="helix" evidence="8">
    <location>
        <begin position="58"/>
        <end position="63"/>
    </location>
</feature>
<feature type="strand" evidence="8">
    <location>
        <begin position="70"/>
        <end position="74"/>
    </location>
</feature>
<feature type="strand" evidence="8">
    <location>
        <begin position="78"/>
        <end position="86"/>
    </location>
</feature>
<feature type="strand" evidence="8">
    <location>
        <begin position="92"/>
        <end position="101"/>
    </location>
</feature>
<feature type="strand" evidence="8">
    <location>
        <begin position="107"/>
        <end position="115"/>
    </location>
</feature>
<feature type="strand" evidence="8">
    <location>
        <begin position="118"/>
        <end position="125"/>
    </location>
</feature>
<feature type="strand" evidence="8">
    <location>
        <begin position="133"/>
        <end position="147"/>
    </location>
</feature>
<feature type="strand" evidence="8">
    <location>
        <begin position="151"/>
        <end position="161"/>
    </location>
</feature>
<feature type="helix" evidence="8">
    <location>
        <begin position="166"/>
        <end position="172"/>
    </location>
</feature>
<feature type="strand" evidence="8">
    <location>
        <begin position="180"/>
        <end position="184"/>
    </location>
</feature>
<feature type="strand" evidence="8">
    <location>
        <begin position="202"/>
        <end position="204"/>
    </location>
</feature>
<reference key="1">
    <citation type="journal article" date="2008" name="PLoS Genet.">
        <title>Genomic islands in the pathogenic filamentous fungus Aspergillus fumigatus.</title>
        <authorList>
            <person name="Fedorova N.D."/>
            <person name="Khaldi N."/>
            <person name="Joardar V.S."/>
            <person name="Maiti R."/>
            <person name="Amedeo P."/>
            <person name="Anderson M.J."/>
            <person name="Crabtree J."/>
            <person name="Silva J.C."/>
            <person name="Badger J.H."/>
            <person name="Albarraq A."/>
            <person name="Angiuoli S."/>
            <person name="Bussey H."/>
            <person name="Bowyer P."/>
            <person name="Cotty P.J."/>
            <person name="Dyer P.S."/>
            <person name="Egan A."/>
            <person name="Galens K."/>
            <person name="Fraser-Liggett C.M."/>
            <person name="Haas B.J."/>
            <person name="Inman J.M."/>
            <person name="Kent R."/>
            <person name="Lemieux S."/>
            <person name="Malavazi I."/>
            <person name="Orvis J."/>
            <person name="Roemer T."/>
            <person name="Ronning C.M."/>
            <person name="Sundaram J.P."/>
            <person name="Sutton G."/>
            <person name="Turner G."/>
            <person name="Venter J.C."/>
            <person name="White O.R."/>
            <person name="Whitty B.R."/>
            <person name="Youngman P."/>
            <person name="Wolfe K.H."/>
            <person name="Goldman G.H."/>
            <person name="Wortman J.R."/>
            <person name="Jiang B."/>
            <person name="Denning D.W."/>
            <person name="Nierman W.C."/>
        </authorList>
    </citation>
    <scope>NUCLEOTIDE SEQUENCE [LARGE SCALE GENOMIC DNA]</scope>
    <source>
        <strain>CBS 144.89 / FGSC A1163 / CEA10</strain>
    </source>
</reference>
<reference evidence="7" key="2">
    <citation type="journal article" date="2021" name="J. Biol. Chem.">
        <title>Characterization of a lytic polysaccharide monooxygenase from Aspergillus fumigatus shows functional variation among family AA11 fungal LPMOs.</title>
        <authorList>
            <person name="Stopamo F.G."/>
            <person name="Rohr A.K."/>
            <person name="Mekasha S."/>
            <person name="Petrovic D.M."/>
            <person name="Varnai A."/>
            <person name="Eijsink V.G.H."/>
        </authorList>
    </citation>
    <scope>X-RAY CRYSTALLOGRAPHY (1.50 ANGSTROMS) OF 19-219</scope>
    <scope>DISULFIDE BONDS</scope>
    <scope>COFACTOR</scope>
    <scope>GLYCOSYLATION AT ASN-80</scope>
    <scope>FUNCTION</scope>
    <scope>CATALYTIC ACTIVITY</scope>
    <scope>SUBSTRATE SPECIFICITY</scope>
</reference>
<organism>
    <name type="scientific">Aspergillus fumigatus (strain CBS 144.89 / FGSC A1163 / CEA10)</name>
    <name type="common">Neosartorya fumigata</name>
    <dbReference type="NCBI Taxonomy" id="451804"/>
    <lineage>
        <taxon>Eukaryota</taxon>
        <taxon>Fungi</taxon>
        <taxon>Dikarya</taxon>
        <taxon>Ascomycota</taxon>
        <taxon>Pezizomycotina</taxon>
        <taxon>Eurotiomycetes</taxon>
        <taxon>Eurotiomycetidae</taxon>
        <taxon>Eurotiales</taxon>
        <taxon>Aspergillaceae</taxon>
        <taxon>Aspergillus</taxon>
        <taxon>Aspergillus subgen. Fumigati</taxon>
    </lineage>
</organism>
<comment type="function">
    <text evidence="4">Lytic polysaccharide monooxygenase (LPMO) that depolymerizes chitin via the oxidation of scissile beta-(1-4)-glycosidic bonds, yielding C1 or C4 oxidation products (PubMed:34798071). Catalysis by LPMOs requires the reduction of the active-site copper from Cu(II) to Cu(I) by a reducing agent and H(2)O(2) or O(2) as a cosubstrate (PubMed:34798071). Has considerable affinity for alpha-chitin and, more so, beta-chitin (PubMed:34798071). Active toward both alpha-chitin and beta-chitin allomorphs and enhances chitin degradation by an endoacting chitinase, in particular for alpha-chitin, and so plays a role in fungal chitin turnover (PubMed:34798071). The catalytic activity increases when supplying reactions with hydrogen peroxide, confirming that it has peroxygenase activity (PubMed:34798071). Does not show activity on phosphoric acid-swollen cellulose (PASC), Avicel, tamarind xyloglucan, birchwood xylan, beechwood xylan, acetyl glucuronoxylan from aspen, ivory nut mannan, acetylated konjac glucomannan, potato starch, heparin, hyaluronic acid, and chitosan (PubMed:34798071).</text>
</comment>
<comment type="cofactor">
    <cofactor evidence="4">
        <name>Cu(2+)</name>
        <dbReference type="ChEBI" id="CHEBI:29036"/>
    </cofactor>
    <text evidence="4">Binds 1 copper ion per subunit.</text>
</comment>
<comment type="similarity">
    <text evidence="6">Belongs to the polysaccharide monooxygenase AA11 family.</text>
</comment>